<sequence>MGFKHKDIIGLQDLTREEIQLLLDTADNMKEINSRDIKKVPTLRGKTVVNVFYEASTRTRTSFEIAAKRLSADTINISASTSSVTKGETLSDTARNILAMKPDIIVMRHAASGAHHYLAQRVSCSVINAGDGAHEHPSQGLLDMLTMRQKFGTIEGLTVAIVGDITHSRVARSDIFGLTKMGAHVRLAGPPTMMPPGIERLGNVTVCRDMREAIEGVDVVMMLRIQLERQGKTLLPTLREYARYYGLNPQNLKLAKPGAMVMHPGPINRGVELSSYVADSDQSAILTQVENGVAVRMAMLYHVSGGELATE</sequence>
<proteinExistence type="inferred from homology"/>
<feature type="chain" id="PRO_0000113137" description="Aspartate carbamoyltransferase catalytic subunit">
    <location>
        <begin position="1"/>
        <end position="311"/>
    </location>
</feature>
<feature type="binding site" evidence="1">
    <location>
        <position position="58"/>
    </location>
    <ligand>
        <name>carbamoyl phosphate</name>
        <dbReference type="ChEBI" id="CHEBI:58228"/>
    </ligand>
</feature>
<feature type="binding site" evidence="1">
    <location>
        <position position="59"/>
    </location>
    <ligand>
        <name>carbamoyl phosphate</name>
        <dbReference type="ChEBI" id="CHEBI:58228"/>
    </ligand>
</feature>
<feature type="binding site" evidence="1">
    <location>
        <position position="86"/>
    </location>
    <ligand>
        <name>L-aspartate</name>
        <dbReference type="ChEBI" id="CHEBI:29991"/>
    </ligand>
</feature>
<feature type="binding site" evidence="1">
    <location>
        <position position="108"/>
    </location>
    <ligand>
        <name>carbamoyl phosphate</name>
        <dbReference type="ChEBI" id="CHEBI:58228"/>
    </ligand>
</feature>
<feature type="binding site" evidence="1">
    <location>
        <position position="136"/>
    </location>
    <ligand>
        <name>carbamoyl phosphate</name>
        <dbReference type="ChEBI" id="CHEBI:58228"/>
    </ligand>
</feature>
<feature type="binding site" evidence="1">
    <location>
        <position position="139"/>
    </location>
    <ligand>
        <name>carbamoyl phosphate</name>
        <dbReference type="ChEBI" id="CHEBI:58228"/>
    </ligand>
</feature>
<feature type="binding site" evidence="1">
    <location>
        <position position="169"/>
    </location>
    <ligand>
        <name>L-aspartate</name>
        <dbReference type="ChEBI" id="CHEBI:29991"/>
    </ligand>
</feature>
<feature type="binding site" evidence="1">
    <location>
        <position position="224"/>
    </location>
    <ligand>
        <name>L-aspartate</name>
        <dbReference type="ChEBI" id="CHEBI:29991"/>
    </ligand>
</feature>
<feature type="binding site" evidence="1">
    <location>
        <position position="265"/>
    </location>
    <ligand>
        <name>carbamoyl phosphate</name>
        <dbReference type="ChEBI" id="CHEBI:58228"/>
    </ligand>
</feature>
<feature type="binding site" evidence="1">
    <location>
        <position position="266"/>
    </location>
    <ligand>
        <name>carbamoyl phosphate</name>
        <dbReference type="ChEBI" id="CHEBI:58228"/>
    </ligand>
</feature>
<accession>Q74DP5</accession>
<evidence type="ECO:0000255" key="1">
    <source>
        <dbReference type="HAMAP-Rule" id="MF_00001"/>
    </source>
</evidence>
<reference key="1">
    <citation type="journal article" date="2003" name="Science">
        <title>Genome of Geobacter sulfurreducens: metal reduction in subsurface environments.</title>
        <authorList>
            <person name="Methe B.A."/>
            <person name="Nelson K.E."/>
            <person name="Eisen J.A."/>
            <person name="Paulsen I.T."/>
            <person name="Nelson W.C."/>
            <person name="Heidelberg J.F."/>
            <person name="Wu D."/>
            <person name="Wu M."/>
            <person name="Ward N.L."/>
            <person name="Beanan M.J."/>
            <person name="Dodson R.J."/>
            <person name="Madupu R."/>
            <person name="Brinkac L.M."/>
            <person name="Daugherty S.C."/>
            <person name="DeBoy R.T."/>
            <person name="Durkin A.S."/>
            <person name="Gwinn M.L."/>
            <person name="Kolonay J.F."/>
            <person name="Sullivan S.A."/>
            <person name="Haft D.H."/>
            <person name="Selengut J."/>
            <person name="Davidsen T.M."/>
            <person name="Zafar N."/>
            <person name="White O."/>
            <person name="Tran B."/>
            <person name="Romero C."/>
            <person name="Forberger H.A."/>
            <person name="Weidman J.F."/>
            <person name="Khouri H.M."/>
            <person name="Feldblyum T.V."/>
            <person name="Utterback T.R."/>
            <person name="Van Aken S.E."/>
            <person name="Lovley D.R."/>
            <person name="Fraser C.M."/>
        </authorList>
    </citation>
    <scope>NUCLEOTIDE SEQUENCE [LARGE SCALE GENOMIC DNA]</scope>
    <source>
        <strain>ATCC 51573 / DSM 12127 / PCA</strain>
    </source>
</reference>
<organism>
    <name type="scientific">Geobacter sulfurreducens (strain ATCC 51573 / DSM 12127 / PCA)</name>
    <dbReference type="NCBI Taxonomy" id="243231"/>
    <lineage>
        <taxon>Bacteria</taxon>
        <taxon>Pseudomonadati</taxon>
        <taxon>Thermodesulfobacteriota</taxon>
        <taxon>Desulfuromonadia</taxon>
        <taxon>Geobacterales</taxon>
        <taxon>Geobacteraceae</taxon>
        <taxon>Geobacter</taxon>
    </lineage>
</organism>
<keyword id="KW-0665">Pyrimidine biosynthesis</keyword>
<keyword id="KW-1185">Reference proteome</keyword>
<keyword id="KW-0808">Transferase</keyword>
<gene>
    <name evidence="1" type="primary">pyrB</name>
    <name type="ordered locus">GSU1271</name>
</gene>
<dbReference type="EC" id="2.1.3.2" evidence="1"/>
<dbReference type="EMBL" id="AE017180">
    <property type="protein sequence ID" value="AAR34647.1"/>
    <property type="molecule type" value="Genomic_DNA"/>
</dbReference>
<dbReference type="RefSeq" id="NP_952324.1">
    <property type="nucleotide sequence ID" value="NC_002939.5"/>
</dbReference>
<dbReference type="RefSeq" id="WP_010941926.1">
    <property type="nucleotide sequence ID" value="NC_002939.5"/>
</dbReference>
<dbReference type="SMR" id="Q74DP5"/>
<dbReference type="FunCoup" id="Q74DP5">
    <property type="interactions" value="583"/>
</dbReference>
<dbReference type="STRING" id="243231.GSU1271"/>
<dbReference type="EnsemblBacteria" id="AAR34647">
    <property type="protein sequence ID" value="AAR34647"/>
    <property type="gene ID" value="GSU1271"/>
</dbReference>
<dbReference type="KEGG" id="gsu:GSU1271"/>
<dbReference type="PATRIC" id="fig|243231.5.peg.1266"/>
<dbReference type="eggNOG" id="COG0540">
    <property type="taxonomic scope" value="Bacteria"/>
</dbReference>
<dbReference type="HOGENOM" id="CLU_043846_2_0_7"/>
<dbReference type="InParanoid" id="Q74DP5"/>
<dbReference type="OrthoDB" id="9774690at2"/>
<dbReference type="UniPathway" id="UPA00070">
    <property type="reaction ID" value="UER00116"/>
</dbReference>
<dbReference type="Proteomes" id="UP000000577">
    <property type="component" value="Chromosome"/>
</dbReference>
<dbReference type="GO" id="GO:0016597">
    <property type="term" value="F:amino acid binding"/>
    <property type="evidence" value="ECO:0007669"/>
    <property type="project" value="InterPro"/>
</dbReference>
<dbReference type="GO" id="GO:0004070">
    <property type="term" value="F:aspartate carbamoyltransferase activity"/>
    <property type="evidence" value="ECO:0007669"/>
    <property type="project" value="UniProtKB-UniRule"/>
</dbReference>
<dbReference type="GO" id="GO:0006207">
    <property type="term" value="P:'de novo' pyrimidine nucleobase biosynthetic process"/>
    <property type="evidence" value="ECO:0007669"/>
    <property type="project" value="InterPro"/>
</dbReference>
<dbReference type="GO" id="GO:0044205">
    <property type="term" value="P:'de novo' UMP biosynthetic process"/>
    <property type="evidence" value="ECO:0007669"/>
    <property type="project" value="UniProtKB-UniRule"/>
</dbReference>
<dbReference type="GO" id="GO:0006520">
    <property type="term" value="P:amino acid metabolic process"/>
    <property type="evidence" value="ECO:0007669"/>
    <property type="project" value="InterPro"/>
</dbReference>
<dbReference type="FunFam" id="3.40.50.1370:FF:000007">
    <property type="entry name" value="Aspartate carbamoyltransferase"/>
    <property type="match status" value="1"/>
</dbReference>
<dbReference type="Gene3D" id="3.40.50.1370">
    <property type="entry name" value="Aspartate/ornithine carbamoyltransferase"/>
    <property type="match status" value="2"/>
</dbReference>
<dbReference type="HAMAP" id="MF_00001">
    <property type="entry name" value="Asp_carb_tr"/>
    <property type="match status" value="1"/>
</dbReference>
<dbReference type="InterPro" id="IPR006132">
    <property type="entry name" value="Asp/Orn_carbamoyltranf_P-bd"/>
</dbReference>
<dbReference type="InterPro" id="IPR006130">
    <property type="entry name" value="Asp/Orn_carbamoylTrfase"/>
</dbReference>
<dbReference type="InterPro" id="IPR036901">
    <property type="entry name" value="Asp/Orn_carbamoylTrfase_sf"/>
</dbReference>
<dbReference type="InterPro" id="IPR002082">
    <property type="entry name" value="Asp_carbamoyltransf"/>
</dbReference>
<dbReference type="InterPro" id="IPR006131">
    <property type="entry name" value="Asp_carbamoyltransf_Asp/Orn-bd"/>
</dbReference>
<dbReference type="NCBIfam" id="TIGR00670">
    <property type="entry name" value="asp_carb_tr"/>
    <property type="match status" value="1"/>
</dbReference>
<dbReference type="NCBIfam" id="NF002032">
    <property type="entry name" value="PRK00856.1"/>
    <property type="match status" value="1"/>
</dbReference>
<dbReference type="PANTHER" id="PTHR45753:SF6">
    <property type="entry name" value="ASPARTATE CARBAMOYLTRANSFERASE"/>
    <property type="match status" value="1"/>
</dbReference>
<dbReference type="PANTHER" id="PTHR45753">
    <property type="entry name" value="ORNITHINE CARBAMOYLTRANSFERASE, MITOCHONDRIAL"/>
    <property type="match status" value="1"/>
</dbReference>
<dbReference type="Pfam" id="PF00185">
    <property type="entry name" value="OTCace"/>
    <property type="match status" value="1"/>
</dbReference>
<dbReference type="Pfam" id="PF02729">
    <property type="entry name" value="OTCace_N"/>
    <property type="match status" value="1"/>
</dbReference>
<dbReference type="PRINTS" id="PR00100">
    <property type="entry name" value="AOTCASE"/>
</dbReference>
<dbReference type="PRINTS" id="PR00101">
    <property type="entry name" value="ATCASE"/>
</dbReference>
<dbReference type="SUPFAM" id="SSF53671">
    <property type="entry name" value="Aspartate/ornithine carbamoyltransferase"/>
    <property type="match status" value="1"/>
</dbReference>
<dbReference type="PROSITE" id="PS00097">
    <property type="entry name" value="CARBAMOYLTRANSFERASE"/>
    <property type="match status" value="1"/>
</dbReference>
<protein>
    <recommendedName>
        <fullName evidence="1">Aspartate carbamoyltransferase catalytic subunit</fullName>
        <ecNumber evidence="1">2.1.3.2</ecNumber>
    </recommendedName>
    <alternativeName>
        <fullName evidence="1">Aspartate transcarbamylase</fullName>
        <shortName evidence="1">ATCase</shortName>
    </alternativeName>
</protein>
<name>PYRB_GEOSL</name>
<comment type="function">
    <text evidence="1">Catalyzes the condensation of carbamoyl phosphate and aspartate to form carbamoyl aspartate and inorganic phosphate, the committed step in the de novo pyrimidine nucleotide biosynthesis pathway.</text>
</comment>
<comment type="catalytic activity">
    <reaction evidence="1">
        <text>carbamoyl phosphate + L-aspartate = N-carbamoyl-L-aspartate + phosphate + H(+)</text>
        <dbReference type="Rhea" id="RHEA:20013"/>
        <dbReference type="ChEBI" id="CHEBI:15378"/>
        <dbReference type="ChEBI" id="CHEBI:29991"/>
        <dbReference type="ChEBI" id="CHEBI:32814"/>
        <dbReference type="ChEBI" id="CHEBI:43474"/>
        <dbReference type="ChEBI" id="CHEBI:58228"/>
        <dbReference type="EC" id="2.1.3.2"/>
    </reaction>
</comment>
<comment type="pathway">
    <text evidence="1">Pyrimidine metabolism; UMP biosynthesis via de novo pathway; (S)-dihydroorotate from bicarbonate: step 2/3.</text>
</comment>
<comment type="subunit">
    <text evidence="1">Heterododecamer (2C3:3R2) of six catalytic PyrB chains organized as two trimers (C3), and six regulatory PyrI chains organized as three dimers (R2).</text>
</comment>
<comment type="similarity">
    <text evidence="1">Belongs to the aspartate/ornithine carbamoyltransferase superfamily. ATCase family.</text>
</comment>